<reference key="1">
    <citation type="journal article" date="2003" name="Arch. Microbiol.">
        <title>Molecular characterization of HPr and related enzymes, and regulation of HPr phosphorylation in the ruminal bacterium Streptococcus bovis.</title>
        <authorList>
            <person name="Asanuma N."/>
            <person name="Hino T."/>
        </authorList>
    </citation>
    <scope>NUCLEOTIDE SEQUENCE [GENOMIC DNA]</scope>
    <scope>CHARACTERIZATION</scope>
    <source>
        <strain>ATCC 700410 / JB1</strain>
    </source>
</reference>
<proteinExistence type="evidence at protein level"/>
<organism>
    <name type="scientific">Streptococcus equinus</name>
    <name type="common">Streptococcus bovis</name>
    <dbReference type="NCBI Taxonomy" id="1335"/>
    <lineage>
        <taxon>Bacteria</taxon>
        <taxon>Bacillati</taxon>
        <taxon>Bacillota</taxon>
        <taxon>Bacilli</taxon>
        <taxon>Lactobacillales</taxon>
        <taxon>Streptococcaceae</taxon>
        <taxon>Streptococcus</taxon>
    </lineage>
</organism>
<keyword id="KW-0067">ATP-binding</keyword>
<keyword id="KW-0119">Carbohydrate metabolism</keyword>
<keyword id="KW-0418">Kinase</keyword>
<keyword id="KW-0460">Magnesium</keyword>
<keyword id="KW-0479">Metal-binding</keyword>
<keyword id="KW-0511">Multifunctional enzyme</keyword>
<keyword id="KW-0547">Nucleotide-binding</keyword>
<keyword id="KW-0723">Serine/threonine-protein kinase</keyword>
<keyword id="KW-0808">Transferase</keyword>
<protein>
    <recommendedName>
        <fullName>HPr kinase/phosphorylase</fullName>
        <shortName>HPrK/P</shortName>
        <ecNumber>2.7.11.-</ecNumber>
        <ecNumber>2.7.4.-</ecNumber>
    </recommendedName>
    <alternativeName>
        <fullName>HPr(Ser) kinase/phosphorylase</fullName>
    </alternativeName>
</protein>
<dbReference type="EC" id="2.7.11.-"/>
<dbReference type="EC" id="2.7.4.-"/>
<dbReference type="EMBL" id="AB027460">
    <property type="protein sequence ID" value="BAA77782.1"/>
    <property type="molecule type" value="Genomic_DNA"/>
</dbReference>
<dbReference type="RefSeq" id="WP_020917207.1">
    <property type="nucleotide sequence ID" value="NZ_FNKE01000001.1"/>
</dbReference>
<dbReference type="SMR" id="Q9WXK7"/>
<dbReference type="STRING" id="1335.A6J79_06500"/>
<dbReference type="GeneID" id="58528586"/>
<dbReference type="OrthoDB" id="9778803at2"/>
<dbReference type="GO" id="GO:0005524">
    <property type="term" value="F:ATP binding"/>
    <property type="evidence" value="ECO:0007669"/>
    <property type="project" value="UniProtKB-UniRule"/>
</dbReference>
<dbReference type="GO" id="GO:0000287">
    <property type="term" value="F:magnesium ion binding"/>
    <property type="evidence" value="ECO:0007669"/>
    <property type="project" value="UniProtKB-UniRule"/>
</dbReference>
<dbReference type="GO" id="GO:0000155">
    <property type="term" value="F:phosphorelay sensor kinase activity"/>
    <property type="evidence" value="ECO:0007669"/>
    <property type="project" value="InterPro"/>
</dbReference>
<dbReference type="GO" id="GO:0004674">
    <property type="term" value="F:protein serine/threonine kinase activity"/>
    <property type="evidence" value="ECO:0007669"/>
    <property type="project" value="UniProtKB-KW"/>
</dbReference>
<dbReference type="GO" id="GO:0004712">
    <property type="term" value="F:protein serine/threonine/tyrosine kinase activity"/>
    <property type="evidence" value="ECO:0007669"/>
    <property type="project" value="UniProtKB-UniRule"/>
</dbReference>
<dbReference type="GO" id="GO:0006109">
    <property type="term" value="P:regulation of carbohydrate metabolic process"/>
    <property type="evidence" value="ECO:0007669"/>
    <property type="project" value="UniProtKB-UniRule"/>
</dbReference>
<dbReference type="CDD" id="cd01918">
    <property type="entry name" value="HprK_C"/>
    <property type="match status" value="1"/>
</dbReference>
<dbReference type="FunFam" id="3.40.50.300:FF:000174">
    <property type="entry name" value="HPr kinase/phosphorylase"/>
    <property type="match status" value="1"/>
</dbReference>
<dbReference type="Gene3D" id="3.40.1390.20">
    <property type="entry name" value="HprK N-terminal domain-like"/>
    <property type="match status" value="1"/>
</dbReference>
<dbReference type="Gene3D" id="3.40.50.300">
    <property type="entry name" value="P-loop containing nucleotide triphosphate hydrolases"/>
    <property type="match status" value="1"/>
</dbReference>
<dbReference type="HAMAP" id="MF_01249">
    <property type="entry name" value="HPr_kinase"/>
    <property type="match status" value="1"/>
</dbReference>
<dbReference type="InterPro" id="IPR003755">
    <property type="entry name" value="HPr(Ser)_kin/Pase"/>
</dbReference>
<dbReference type="InterPro" id="IPR011104">
    <property type="entry name" value="Hpr_kin/Pase_C"/>
</dbReference>
<dbReference type="InterPro" id="IPR011126">
    <property type="entry name" value="Hpr_kin/Pase_Hpr_N"/>
</dbReference>
<dbReference type="InterPro" id="IPR027417">
    <property type="entry name" value="P-loop_NTPase"/>
</dbReference>
<dbReference type="InterPro" id="IPR028979">
    <property type="entry name" value="Ser_kin/Pase_Hpr-like_N_sf"/>
</dbReference>
<dbReference type="NCBIfam" id="TIGR00679">
    <property type="entry name" value="hpr-ser"/>
    <property type="match status" value="1"/>
</dbReference>
<dbReference type="PANTHER" id="PTHR30305:SF1">
    <property type="entry name" value="HPR KINASE_PHOSPHORYLASE"/>
    <property type="match status" value="1"/>
</dbReference>
<dbReference type="PANTHER" id="PTHR30305">
    <property type="entry name" value="PROTEIN YJDM-RELATED"/>
    <property type="match status" value="1"/>
</dbReference>
<dbReference type="Pfam" id="PF07475">
    <property type="entry name" value="Hpr_kinase_C"/>
    <property type="match status" value="1"/>
</dbReference>
<dbReference type="Pfam" id="PF02603">
    <property type="entry name" value="Hpr_kinase_N"/>
    <property type="match status" value="1"/>
</dbReference>
<dbReference type="SUPFAM" id="SSF75138">
    <property type="entry name" value="HprK N-terminal domain-like"/>
    <property type="match status" value="1"/>
</dbReference>
<dbReference type="SUPFAM" id="SSF53795">
    <property type="entry name" value="PEP carboxykinase-like"/>
    <property type="match status" value="1"/>
</dbReference>
<feature type="chain" id="PRO_0000058994" description="HPr kinase/phosphorylase">
    <location>
        <begin position="1"/>
        <end position="310"/>
    </location>
</feature>
<feature type="region of interest" description="Important for the catalytic mechanism of both phosphorylation and dephosphorylation" evidence="1">
    <location>
        <begin position="201"/>
        <end position="210"/>
    </location>
</feature>
<feature type="region of interest" description="Important for the catalytic mechanism of dephosphorylation" evidence="1">
    <location>
        <begin position="264"/>
        <end position="269"/>
    </location>
</feature>
<feature type="active site" evidence="1">
    <location>
        <position position="138"/>
    </location>
</feature>
<feature type="active site" evidence="1">
    <location>
        <position position="159"/>
    </location>
</feature>
<feature type="active site" description="Proton acceptor; for phosphorylation activity. Proton donor; for dephosphorylation activity" evidence="1">
    <location>
        <position position="177"/>
    </location>
</feature>
<feature type="active site" evidence="1">
    <location>
        <position position="243"/>
    </location>
</feature>
<feature type="binding site" evidence="1">
    <location>
        <begin position="153"/>
        <end position="160"/>
    </location>
    <ligand>
        <name>ATP</name>
        <dbReference type="ChEBI" id="CHEBI:30616"/>
    </ligand>
</feature>
<feature type="binding site" evidence="2">
    <location>
        <position position="160"/>
    </location>
    <ligand>
        <name>Mg(2+)</name>
        <dbReference type="ChEBI" id="CHEBI:18420"/>
    </ligand>
</feature>
<feature type="binding site" evidence="2">
    <location>
        <position position="202"/>
    </location>
    <ligand>
        <name>Mg(2+)</name>
        <dbReference type="ChEBI" id="CHEBI:18420"/>
    </ligand>
</feature>
<accession>Q9WXK7</accession>
<evidence type="ECO:0000250" key="1"/>
<evidence type="ECO:0000255" key="2"/>
<evidence type="ECO:0000305" key="3"/>
<name>HPRK_STREI</name>
<comment type="function">
    <text>Catalyzes the ATP- as well as probably the pyrophosphate-dependent phosphorylation of 'Ser-46' in HPr, a phosphocarrier protein of the phosphoenolpyruvate-dependent sugar phosphotransferase system (PTS). HprK/P also catalyzes the pyrophosphate-producing, inorganic phosphate-dependent dephosphorylation (phosphorolysis) of seryl-phosphorylated HPr (P-Ser-HPr). The two antagonistic activities of HprK/P are regulated by several intracellular metabolites, which change their concentration in response to the absence or presence of rapidly metabolisable carbon sources (glucose, fructose, etc.) in the growth medium. Therefore, by controlling the phosphorylation state of HPr, the HPrK/P is a sensor enzyme that plays a major role in the regulation of carbon metabolism and sugar transport: it probably mediates carbon catabolite repression (CCR), and regulates PTS-catalyzed carbohydrate uptake and inducer exclusion.</text>
</comment>
<comment type="catalytic activity">
    <reaction>
        <text>[HPr protein]-L-serine + ATP = [HPr protein]-O-phospho-L-serine + ADP + H(+)</text>
        <dbReference type="Rhea" id="RHEA:46600"/>
        <dbReference type="Rhea" id="RHEA-COMP:11602"/>
        <dbReference type="Rhea" id="RHEA-COMP:11603"/>
        <dbReference type="ChEBI" id="CHEBI:15378"/>
        <dbReference type="ChEBI" id="CHEBI:29999"/>
        <dbReference type="ChEBI" id="CHEBI:30616"/>
        <dbReference type="ChEBI" id="CHEBI:83421"/>
        <dbReference type="ChEBI" id="CHEBI:456216"/>
    </reaction>
</comment>
<comment type="catalytic activity">
    <reaction>
        <text>[HPr protein]-O-phospho-L-serine + phosphate + H(+) = [HPr protein]-L-serine + diphosphate</text>
        <dbReference type="Rhea" id="RHEA:46604"/>
        <dbReference type="Rhea" id="RHEA-COMP:11602"/>
        <dbReference type="Rhea" id="RHEA-COMP:11603"/>
        <dbReference type="ChEBI" id="CHEBI:15378"/>
        <dbReference type="ChEBI" id="CHEBI:29999"/>
        <dbReference type="ChEBI" id="CHEBI:33019"/>
        <dbReference type="ChEBI" id="CHEBI:43474"/>
        <dbReference type="ChEBI" id="CHEBI:83421"/>
    </reaction>
</comment>
<comment type="cofactor">
    <cofactor>
        <name>Mg(2+)</name>
        <dbReference type="ChEBI" id="CHEBI:18420"/>
    </cofactor>
    <cofactor>
        <name>Mn(2+)</name>
        <dbReference type="ChEBI" id="CHEBI:29035"/>
    </cofactor>
</comment>
<comment type="activity regulation">
    <text>Kinase activity is inhibited by inorganic phosphate (Pi). In contrast to many other bacteria, neither kinase activity nor phosphorylase activity is affected by fructose 1,6-bisphosphate (FBP).</text>
</comment>
<comment type="biophysicochemical properties">
    <phDependence>
        <text>Optimum pH is 7.0 for both kinase and phosphorylase reactions. Activity decreases to less than 10% of the maximal activity at pH 5.5.</text>
    </phDependence>
</comment>
<comment type="subunit">
    <text evidence="1">Homohexamer.</text>
</comment>
<comment type="induction">
    <text>Constitutively expressed. Transcription of S.bovis hprK is not significantly altered by growth rate or energy source.</text>
</comment>
<comment type="domain">
    <text evidence="1">The Walker A ATP-binding motif also binds Pi and PPi.</text>
</comment>
<comment type="miscellaneous">
    <text evidence="1">Both phosphorylation and phosphorolysis are carried out by the same active site and suggest a common mechanism for both reactions.</text>
</comment>
<comment type="similarity">
    <text evidence="3">Belongs to the HPrK/P family.</text>
</comment>
<comment type="caution">
    <text evidence="3">PubMed:12610726 presented the dephosphorylation reaction catalyzed by HPrK/P as a phosphatase activity, but it is most likely a phosphorylase activity as shown in B.subtilis.</text>
</comment>
<gene>
    <name type="primary">hprK</name>
</gene>
<sequence>MSVTVKMLVDKVKLDVIYGDDDLLSKEITTSDISRPGLEMTGYFDYYSPERLQLLGMKEWSYLTKMTSHNRRHVLREMIKPETPAIIVARNLAIPEEMISAAKEKGIAILQSHVPTSRLSGEMSWYLDSCLAERTSVHGVLMDIYGMGVLIQGDSGIGKSETGLELVKRGHRLVADDRVDVFAKDEETLWGEPAEILRHLLEIRGVGIIDVMSLYGASAVKDSSQVQLAIYLENYESGKVFDRLGNGNEELELSGVKIPRLRIPVQTGRNMSVVIEAAAMNYRAKQMGFDATKTFEERLTQLITKNEGNQ</sequence>